<reference key="1">
    <citation type="journal article" date="2004" name="Proc. Natl. Acad. Sci. U.S.A.">
        <title>The genome sequence of the probiotic intestinal bacterium Lactobacillus johnsonii NCC 533.</title>
        <authorList>
            <person name="Pridmore R.D."/>
            <person name="Berger B."/>
            <person name="Desiere F."/>
            <person name="Vilanova D."/>
            <person name="Barretto C."/>
            <person name="Pittet A.-C."/>
            <person name="Zwahlen M.-C."/>
            <person name="Rouvet M."/>
            <person name="Altermann E."/>
            <person name="Barrangou R."/>
            <person name="Mollet B."/>
            <person name="Mercenier A."/>
            <person name="Klaenhammer T."/>
            <person name="Arigoni F."/>
            <person name="Schell M.A."/>
        </authorList>
    </citation>
    <scope>NUCLEOTIDE SEQUENCE [LARGE SCALE GENOMIC DNA]</scope>
    <source>
        <strain>CNCM I-1225 / La1 / NCC 533</strain>
    </source>
</reference>
<name>GRPE_LACJO</name>
<protein>
    <recommendedName>
        <fullName evidence="1">Protein GrpE</fullName>
    </recommendedName>
    <alternativeName>
        <fullName evidence="1">HSP-70 cofactor</fullName>
    </alternativeName>
</protein>
<feature type="chain" id="PRO_0000113798" description="Protein GrpE">
    <location>
        <begin position="1"/>
        <end position="192"/>
    </location>
</feature>
<feature type="region of interest" description="Disordered" evidence="2">
    <location>
        <begin position="1"/>
        <end position="41"/>
    </location>
</feature>
<organism>
    <name type="scientific">Lactobacillus johnsonii (strain CNCM I-12250 / La1 / NCC 533)</name>
    <dbReference type="NCBI Taxonomy" id="257314"/>
    <lineage>
        <taxon>Bacteria</taxon>
        <taxon>Bacillati</taxon>
        <taxon>Bacillota</taxon>
        <taxon>Bacilli</taxon>
        <taxon>Lactobacillales</taxon>
        <taxon>Lactobacillaceae</taxon>
        <taxon>Lactobacillus</taxon>
    </lineage>
</organism>
<dbReference type="EMBL" id="AE017198">
    <property type="protein sequence ID" value="AAS09248.1"/>
    <property type="molecule type" value="Genomic_DNA"/>
</dbReference>
<dbReference type="RefSeq" id="WP_011162231.1">
    <property type="nucleotide sequence ID" value="NC_005362.1"/>
</dbReference>
<dbReference type="SMR" id="Q74IT5"/>
<dbReference type="KEGG" id="ljo:LJ_1480"/>
<dbReference type="PATRIC" id="fig|257314.6.peg.1297"/>
<dbReference type="eggNOG" id="COG0576">
    <property type="taxonomic scope" value="Bacteria"/>
</dbReference>
<dbReference type="HOGENOM" id="CLU_057217_6_3_9"/>
<dbReference type="Proteomes" id="UP000000581">
    <property type="component" value="Chromosome"/>
</dbReference>
<dbReference type="GO" id="GO:0005737">
    <property type="term" value="C:cytoplasm"/>
    <property type="evidence" value="ECO:0007669"/>
    <property type="project" value="UniProtKB-SubCell"/>
</dbReference>
<dbReference type="GO" id="GO:0000774">
    <property type="term" value="F:adenyl-nucleotide exchange factor activity"/>
    <property type="evidence" value="ECO:0007669"/>
    <property type="project" value="InterPro"/>
</dbReference>
<dbReference type="GO" id="GO:0042803">
    <property type="term" value="F:protein homodimerization activity"/>
    <property type="evidence" value="ECO:0007669"/>
    <property type="project" value="InterPro"/>
</dbReference>
<dbReference type="GO" id="GO:0051087">
    <property type="term" value="F:protein-folding chaperone binding"/>
    <property type="evidence" value="ECO:0007669"/>
    <property type="project" value="InterPro"/>
</dbReference>
<dbReference type="GO" id="GO:0051082">
    <property type="term" value="F:unfolded protein binding"/>
    <property type="evidence" value="ECO:0007669"/>
    <property type="project" value="TreeGrafter"/>
</dbReference>
<dbReference type="GO" id="GO:0006457">
    <property type="term" value="P:protein folding"/>
    <property type="evidence" value="ECO:0007669"/>
    <property type="project" value="InterPro"/>
</dbReference>
<dbReference type="CDD" id="cd00446">
    <property type="entry name" value="GrpE"/>
    <property type="match status" value="1"/>
</dbReference>
<dbReference type="FunFam" id="2.30.22.10:FF:000001">
    <property type="entry name" value="Protein GrpE"/>
    <property type="match status" value="1"/>
</dbReference>
<dbReference type="Gene3D" id="3.90.20.20">
    <property type="match status" value="1"/>
</dbReference>
<dbReference type="Gene3D" id="2.30.22.10">
    <property type="entry name" value="Head domain of nucleotide exchange factor GrpE"/>
    <property type="match status" value="1"/>
</dbReference>
<dbReference type="HAMAP" id="MF_01151">
    <property type="entry name" value="GrpE"/>
    <property type="match status" value="1"/>
</dbReference>
<dbReference type="InterPro" id="IPR000740">
    <property type="entry name" value="GrpE"/>
</dbReference>
<dbReference type="InterPro" id="IPR013805">
    <property type="entry name" value="GrpE_coiled_coil"/>
</dbReference>
<dbReference type="InterPro" id="IPR009012">
    <property type="entry name" value="GrpE_head"/>
</dbReference>
<dbReference type="NCBIfam" id="NF010738">
    <property type="entry name" value="PRK14140.1"/>
    <property type="match status" value="1"/>
</dbReference>
<dbReference type="NCBIfam" id="NF010759">
    <property type="entry name" value="PRK14162.1"/>
    <property type="match status" value="1"/>
</dbReference>
<dbReference type="PANTHER" id="PTHR21237">
    <property type="entry name" value="GRPE PROTEIN"/>
    <property type="match status" value="1"/>
</dbReference>
<dbReference type="PANTHER" id="PTHR21237:SF23">
    <property type="entry name" value="GRPE PROTEIN HOMOLOG, MITOCHONDRIAL"/>
    <property type="match status" value="1"/>
</dbReference>
<dbReference type="Pfam" id="PF01025">
    <property type="entry name" value="GrpE"/>
    <property type="match status" value="1"/>
</dbReference>
<dbReference type="PRINTS" id="PR00773">
    <property type="entry name" value="GRPEPROTEIN"/>
</dbReference>
<dbReference type="SUPFAM" id="SSF58014">
    <property type="entry name" value="Coiled-coil domain of nucleotide exchange factor GrpE"/>
    <property type="match status" value="1"/>
</dbReference>
<dbReference type="SUPFAM" id="SSF51064">
    <property type="entry name" value="Head domain of nucleotide exchange factor GrpE"/>
    <property type="match status" value="1"/>
</dbReference>
<dbReference type="PROSITE" id="PS01071">
    <property type="entry name" value="GRPE"/>
    <property type="match status" value="1"/>
</dbReference>
<proteinExistence type="inferred from homology"/>
<accession>Q74IT5</accession>
<evidence type="ECO:0000255" key="1">
    <source>
        <dbReference type="HAMAP-Rule" id="MF_01151"/>
    </source>
</evidence>
<evidence type="ECO:0000256" key="2">
    <source>
        <dbReference type="SAM" id="MobiDB-lite"/>
    </source>
</evidence>
<sequence>MSKEEFPHEKDLKDEVTPDKAPKKDPKAAPKEEVKENPVENYEKEIAELTAKNKDLEDKYLRSEAEIQNMQARYAKERAQLIKYESQSLAKEVLPAMDNLERALAVKADDEAAKQLQKGVQMTLDSLVKSMKDQGITEIKAEGETFDPSLHQAVQTVAAENDERKDRVVKVLQKGYQYKDRTLRPAMVVVAQ</sequence>
<comment type="function">
    <text evidence="1">Participates actively in the response to hyperosmotic and heat shock by preventing the aggregation of stress-denatured proteins, in association with DnaK and GrpE. It is the nucleotide exchange factor for DnaK and may function as a thermosensor. Unfolded proteins bind initially to DnaJ; upon interaction with the DnaJ-bound protein, DnaK hydrolyzes its bound ATP, resulting in the formation of a stable complex. GrpE releases ADP from DnaK; ATP binding to DnaK triggers the release of the substrate protein, thus completing the reaction cycle. Several rounds of ATP-dependent interactions between DnaJ, DnaK and GrpE are required for fully efficient folding.</text>
</comment>
<comment type="subunit">
    <text evidence="1">Homodimer.</text>
</comment>
<comment type="subcellular location">
    <subcellularLocation>
        <location evidence="1">Cytoplasm</location>
    </subcellularLocation>
</comment>
<comment type="similarity">
    <text evidence="1">Belongs to the GrpE family.</text>
</comment>
<gene>
    <name evidence="1" type="primary">grpE</name>
    <name type="ordered locus">LJ_1480</name>
</gene>
<keyword id="KW-0143">Chaperone</keyword>
<keyword id="KW-0963">Cytoplasm</keyword>
<keyword id="KW-0346">Stress response</keyword>